<evidence type="ECO:0000250" key="1">
    <source>
        <dbReference type="UniProtKB" id="O35681"/>
    </source>
</evidence>
<evidence type="ECO:0000250" key="2">
    <source>
        <dbReference type="UniProtKB" id="Q9BQG1"/>
    </source>
</evidence>
<evidence type="ECO:0000255" key="3"/>
<evidence type="ECO:0000255" key="4">
    <source>
        <dbReference type="PROSITE-ProRule" id="PRU00041"/>
    </source>
</evidence>
<evidence type="ECO:0000256" key="5">
    <source>
        <dbReference type="SAM" id="MobiDB-lite"/>
    </source>
</evidence>
<evidence type="ECO:0000269" key="6">
    <source>
    </source>
</evidence>
<evidence type="ECO:0000269" key="7">
    <source>
    </source>
</evidence>
<evidence type="ECO:0000269" key="8">
    <source>
    </source>
</evidence>
<evidence type="ECO:0000269" key="9">
    <source>
    </source>
</evidence>
<evidence type="ECO:0000305" key="10"/>
<evidence type="ECO:0007829" key="11">
    <source>
        <dbReference type="PDB" id="1DQV"/>
    </source>
</evidence>
<evidence type="ECO:0007829" key="12">
    <source>
        <dbReference type="PDB" id="3HN8"/>
    </source>
</evidence>
<proteinExistence type="evidence at protein level"/>
<feature type="chain" id="PRO_0000183947" description="Synaptotagmin-3">
    <location>
        <begin position="1"/>
        <end position="588"/>
    </location>
</feature>
<feature type="topological domain" description="Vesicular" evidence="3">
    <location>
        <begin position="1"/>
        <end position="54"/>
    </location>
</feature>
<feature type="transmembrane region" description="Helical" evidence="3">
    <location>
        <begin position="55"/>
        <end position="75"/>
    </location>
</feature>
<feature type="topological domain" description="Cytoplasmic" evidence="3">
    <location>
        <begin position="76"/>
        <end position="588"/>
    </location>
</feature>
<feature type="domain" description="C2 1" evidence="4">
    <location>
        <begin position="297"/>
        <end position="418"/>
    </location>
</feature>
<feature type="domain" description="C2 2" evidence="4">
    <location>
        <begin position="429"/>
        <end position="563"/>
    </location>
</feature>
<feature type="region of interest" description="Cysteine motif" evidence="1">
    <location>
        <begin position="10"/>
        <end position="34"/>
    </location>
</feature>
<feature type="region of interest" description="Disordered" evidence="5">
    <location>
        <begin position="129"/>
        <end position="161"/>
    </location>
</feature>
<feature type="region of interest" description="Disordered" evidence="5">
    <location>
        <begin position="183"/>
        <end position="222"/>
    </location>
</feature>
<feature type="region of interest" description="Disordered" evidence="5">
    <location>
        <begin position="238"/>
        <end position="257"/>
    </location>
</feature>
<feature type="compositionally biased region" description="Low complexity" evidence="5">
    <location>
        <begin position="183"/>
        <end position="205"/>
    </location>
</feature>
<feature type="compositionally biased region" description="Polar residues" evidence="5">
    <location>
        <begin position="213"/>
        <end position="222"/>
    </location>
</feature>
<feature type="binding site" evidence="4">
    <location>
        <position position="328"/>
    </location>
    <ligand>
        <name>Ca(2+)</name>
        <dbReference type="ChEBI" id="CHEBI:29108"/>
        <label>1</label>
    </ligand>
</feature>
<feature type="binding site" evidence="4">
    <location>
        <position position="328"/>
    </location>
    <ligand>
        <name>Ca(2+)</name>
        <dbReference type="ChEBI" id="CHEBI:29108"/>
        <label>2</label>
    </ligand>
</feature>
<feature type="binding site" evidence="4">
    <location>
        <position position="334"/>
    </location>
    <ligand>
        <name>Ca(2+)</name>
        <dbReference type="ChEBI" id="CHEBI:29108"/>
        <label>1</label>
    </ligand>
</feature>
<feature type="binding site" evidence="4">
    <location>
        <position position="386"/>
    </location>
    <ligand>
        <name>Ca(2+)</name>
        <dbReference type="ChEBI" id="CHEBI:29108"/>
        <label>1</label>
    </ligand>
</feature>
<feature type="binding site" evidence="4">
    <location>
        <position position="386"/>
    </location>
    <ligand>
        <name>Ca(2+)</name>
        <dbReference type="ChEBI" id="CHEBI:29108"/>
        <label>2</label>
    </ligand>
</feature>
<feature type="binding site" evidence="4">
    <location>
        <position position="387"/>
    </location>
    <ligand>
        <name>Ca(2+)</name>
        <dbReference type="ChEBI" id="CHEBI:29108"/>
        <label>1</label>
    </ligand>
</feature>
<feature type="binding site" evidence="4">
    <location>
        <position position="388"/>
    </location>
    <ligand>
        <name>Ca(2+)</name>
        <dbReference type="ChEBI" id="CHEBI:29108"/>
        <label>1</label>
    </ligand>
</feature>
<feature type="binding site" evidence="4">
    <location>
        <position position="388"/>
    </location>
    <ligand>
        <name>Ca(2+)</name>
        <dbReference type="ChEBI" id="CHEBI:29108"/>
        <label>2</label>
    </ligand>
</feature>
<feature type="binding site" evidence="4">
    <location>
        <position position="388"/>
    </location>
    <ligand>
        <name>Ca(2+)</name>
        <dbReference type="ChEBI" id="CHEBI:29108"/>
        <label>3</label>
    </ligand>
</feature>
<feature type="binding site" evidence="4">
    <location>
        <position position="391"/>
    </location>
    <ligand>
        <name>Ca(2+)</name>
        <dbReference type="ChEBI" id="CHEBI:29108"/>
        <label>3</label>
    </ligand>
</feature>
<feature type="binding site" evidence="4">
    <location>
        <position position="394"/>
    </location>
    <ligand>
        <name>Ca(2+)</name>
        <dbReference type="ChEBI" id="CHEBI:29108"/>
        <label>2</label>
    </ligand>
</feature>
<feature type="binding site" evidence="4">
    <location>
        <position position="394"/>
    </location>
    <ligand>
        <name>Ca(2+)</name>
        <dbReference type="ChEBI" id="CHEBI:29108"/>
        <label>3</label>
    </ligand>
</feature>
<feature type="binding site" evidence="4">
    <location>
        <position position="460"/>
    </location>
    <ligand>
        <name>Ca(2+)</name>
        <dbReference type="ChEBI" id="CHEBI:29108"/>
        <label>4</label>
    </ligand>
</feature>
<feature type="binding site" evidence="4">
    <location>
        <position position="466"/>
    </location>
    <ligand>
        <name>Ca(2+)</name>
        <dbReference type="ChEBI" id="CHEBI:29108"/>
        <label>4</label>
    </ligand>
</feature>
<feature type="binding site" evidence="4">
    <location>
        <position position="520"/>
    </location>
    <ligand>
        <name>Ca(2+)</name>
        <dbReference type="ChEBI" id="CHEBI:29108"/>
        <label>4</label>
    </ligand>
</feature>
<feature type="binding site" evidence="4">
    <location>
        <position position="522"/>
    </location>
    <ligand>
        <name>Ca(2+)</name>
        <dbReference type="ChEBI" id="CHEBI:29108"/>
        <label>4</label>
    </ligand>
</feature>
<feature type="modified residue" description="Omega-N-methylarginine" evidence="1">
    <location>
        <position position="286"/>
    </location>
</feature>
<feature type="mutagenesis site" description="Abolishes Ca(2+)-dependent phospholipid-binding." evidence="6">
    <original>D</original>
    <variation>N</variation>
    <location>
        <position position="334"/>
    </location>
</feature>
<feature type="sequence conflict" description="In Ref. 2; AAK56959." evidence="10" ref="2">
    <original>T</original>
    <variation>S</variation>
    <location>
        <position position="287"/>
    </location>
</feature>
<feature type="sequence conflict" description="In Ref. 2; AAK56959." evidence="10" ref="2">
    <original>L</original>
    <variation>R</variation>
    <location>
        <position position="445"/>
    </location>
</feature>
<feature type="strand" evidence="11">
    <location>
        <begin position="300"/>
        <end position="306"/>
    </location>
</feature>
<feature type="strand" evidence="11">
    <location>
        <begin position="309"/>
        <end position="311"/>
    </location>
</feature>
<feature type="strand" evidence="11">
    <location>
        <begin position="313"/>
        <end position="322"/>
    </location>
</feature>
<feature type="strand" evidence="11">
    <location>
        <begin position="335"/>
        <end position="340"/>
    </location>
</feature>
<feature type="strand" evidence="12">
    <location>
        <begin position="344"/>
        <end position="350"/>
    </location>
</feature>
<feature type="strand" evidence="11">
    <location>
        <begin position="361"/>
        <end position="369"/>
    </location>
</feature>
<feature type="helix" evidence="11">
    <location>
        <begin position="372"/>
        <end position="375"/>
    </location>
</feature>
<feature type="strand" evidence="11">
    <location>
        <begin position="381"/>
        <end position="386"/>
    </location>
</feature>
<feature type="strand" evidence="11">
    <location>
        <begin position="389"/>
        <end position="391"/>
    </location>
</feature>
<feature type="strand" evidence="11">
    <location>
        <begin position="395"/>
        <end position="400"/>
    </location>
</feature>
<feature type="helix" evidence="11">
    <location>
        <begin position="406"/>
        <end position="408"/>
    </location>
</feature>
<feature type="strand" evidence="12">
    <location>
        <begin position="412"/>
        <end position="414"/>
    </location>
</feature>
<feature type="strand" evidence="12">
    <location>
        <begin position="416"/>
        <end position="419"/>
    </location>
</feature>
<feature type="strand" evidence="11">
    <location>
        <begin position="432"/>
        <end position="440"/>
    </location>
</feature>
<feature type="turn" evidence="11">
    <location>
        <begin position="441"/>
        <end position="444"/>
    </location>
</feature>
<feature type="strand" evidence="11">
    <location>
        <begin position="445"/>
        <end position="455"/>
    </location>
</feature>
<feature type="strand" evidence="11">
    <location>
        <begin position="460"/>
        <end position="463"/>
    </location>
</feature>
<feature type="strand" evidence="11">
    <location>
        <begin position="467"/>
        <end position="471"/>
    </location>
</feature>
<feature type="strand" evidence="12">
    <location>
        <begin position="478"/>
        <end position="484"/>
    </location>
</feature>
<feature type="strand" evidence="12">
    <location>
        <begin position="490"/>
        <end position="493"/>
    </location>
</feature>
<feature type="strand" evidence="11">
    <location>
        <begin position="495"/>
        <end position="498"/>
    </location>
</feature>
<feature type="strand" evidence="12">
    <location>
        <begin position="501"/>
        <end position="503"/>
    </location>
</feature>
<feature type="helix" evidence="11">
    <location>
        <begin position="507"/>
        <end position="510"/>
    </location>
</feature>
<feature type="strand" evidence="11">
    <location>
        <begin position="517"/>
        <end position="520"/>
    </location>
</feature>
<feature type="strand" evidence="11">
    <location>
        <begin position="523"/>
        <end position="525"/>
    </location>
</feature>
<feature type="strand" evidence="11">
    <location>
        <begin position="528"/>
        <end position="532"/>
    </location>
</feature>
<feature type="helix" evidence="11">
    <location>
        <begin position="542"/>
        <end position="549"/>
    </location>
</feature>
<feature type="strand" evidence="11">
    <location>
        <begin position="551"/>
        <end position="557"/>
    </location>
</feature>
<feature type="strand" evidence="12">
    <location>
        <begin position="561"/>
        <end position="564"/>
    </location>
</feature>
<feature type="helix" evidence="12">
    <location>
        <begin position="568"/>
        <end position="570"/>
    </location>
</feature>
<sequence length="588" mass="63313">MSGDYEDDLCRRALILVSDLCARIRDADTNDRCQEFNELRIRGYPRGPDADISVSLLSVIVTFCGIVLLGVSLFVSWKLCWVPWRDKGGSAVGGGPLRKDLAPGVGLAGLVGGGGHHLGASLGGHPLLGGPHHHAHPAHHPPFAELLEPGGLGGSEPPEPSYLDMDSYPEAAVASVVAAGVKPSQTSPELPSEGGTGSGLLLLPPSGGGLPSAQSHQQVTSLAPTTRYPALPRPLTQQTLTTQADPSSEERPPALPLPLPGGEEKAKLIGQIKPELYQGTGPGGRRTGGGSGEAGAPCGRISFALRYLYGSDQLVVRILQALDLPAKDSNGFSDPYVKIYLLPDRKKKFQTKVHRKTLNPIFNETFQFSVPLAELAQRKLHFSVYDFDRFSRHDLIGQVVLDNLLELAEQPPDRPLWRDILEGGSEKADLGELNFSLCYLPTAGLLTVTIIKASNLKAMDLTGFSDPYVKASLISEGRRLKKRKTSIKKNTLNPTYNEALVFDVAPESVENVGLSIAVVDYDCIGHNEVIGVCRVGPEAADPHGREHWAEMLANPRKPVEHWHQLVEEKTLSSFTKGGKGLSEKENSE</sequence>
<organism>
    <name type="scientific">Rattus norvegicus</name>
    <name type="common">Rat</name>
    <dbReference type="NCBI Taxonomy" id="10116"/>
    <lineage>
        <taxon>Eukaryota</taxon>
        <taxon>Metazoa</taxon>
        <taxon>Chordata</taxon>
        <taxon>Craniata</taxon>
        <taxon>Vertebrata</taxon>
        <taxon>Euteleostomi</taxon>
        <taxon>Mammalia</taxon>
        <taxon>Eutheria</taxon>
        <taxon>Euarchontoglires</taxon>
        <taxon>Glires</taxon>
        <taxon>Rodentia</taxon>
        <taxon>Myomorpha</taxon>
        <taxon>Muroidea</taxon>
        <taxon>Muridae</taxon>
        <taxon>Murinae</taxon>
        <taxon>Rattus</taxon>
    </lineage>
</organism>
<protein>
    <recommendedName>
        <fullName>Synaptotagmin-3</fullName>
    </recommendedName>
    <alternativeName>
        <fullName>Synaptotagmin III</fullName>
        <shortName>SytIII</shortName>
    </alternativeName>
</protein>
<dbReference type="EMBL" id="D28512">
    <property type="protein sequence ID" value="BAA05870.1"/>
    <property type="molecule type" value="mRNA"/>
</dbReference>
<dbReference type="EMBL" id="AF375464">
    <property type="protein sequence ID" value="AAK56959.1"/>
    <property type="molecule type" value="mRNA"/>
</dbReference>
<dbReference type="PIR" id="A53563">
    <property type="entry name" value="A53563"/>
</dbReference>
<dbReference type="RefSeq" id="NP_061995.1">
    <property type="nucleotide sequence ID" value="NM_019122.1"/>
</dbReference>
<dbReference type="RefSeq" id="XP_006229040.1">
    <property type="nucleotide sequence ID" value="XM_006228978.3"/>
</dbReference>
<dbReference type="RefSeq" id="XP_006229041.1">
    <property type="nucleotide sequence ID" value="XM_006228979.3"/>
</dbReference>
<dbReference type="RefSeq" id="XP_008757547.1">
    <property type="nucleotide sequence ID" value="XM_008759325.2"/>
</dbReference>
<dbReference type="RefSeq" id="XP_017444322.1">
    <property type="nucleotide sequence ID" value="XM_017588833.1"/>
</dbReference>
<dbReference type="PDB" id="1DQV">
    <property type="method" value="X-ray"/>
    <property type="resolution" value="3.20 A"/>
    <property type="chains" value="A=293-588"/>
</dbReference>
<dbReference type="PDB" id="3HN8">
    <property type="method" value="X-ray"/>
    <property type="resolution" value="3.50 A"/>
    <property type="chains" value="A/B/C=292-587"/>
</dbReference>
<dbReference type="PDBsum" id="1DQV"/>
<dbReference type="PDBsum" id="3HN8"/>
<dbReference type="SMR" id="P40748"/>
<dbReference type="BioGRID" id="247760">
    <property type="interactions" value="1"/>
</dbReference>
<dbReference type="FunCoup" id="P40748">
    <property type="interactions" value="690"/>
</dbReference>
<dbReference type="IntAct" id="P40748">
    <property type="interactions" value="5"/>
</dbReference>
<dbReference type="STRING" id="10116.ENSRNOP00000026251"/>
<dbReference type="iPTMnet" id="P40748"/>
<dbReference type="PhosphoSitePlus" id="P40748"/>
<dbReference type="PaxDb" id="10116-ENSRNOP00000026251"/>
<dbReference type="ABCD" id="P40748">
    <property type="antibodies" value="1 sequenced antibody"/>
</dbReference>
<dbReference type="GeneID" id="25731"/>
<dbReference type="KEGG" id="rno:25731"/>
<dbReference type="UCSC" id="RGD:3805">
    <property type="organism name" value="rat"/>
</dbReference>
<dbReference type="AGR" id="RGD:3805"/>
<dbReference type="CTD" id="84258"/>
<dbReference type="RGD" id="3805">
    <property type="gene designation" value="Syt3"/>
</dbReference>
<dbReference type="eggNOG" id="KOG1028">
    <property type="taxonomic scope" value="Eukaryota"/>
</dbReference>
<dbReference type="InParanoid" id="P40748"/>
<dbReference type="OrthoDB" id="67700at2759"/>
<dbReference type="PhylomeDB" id="P40748"/>
<dbReference type="TreeFam" id="TF315600"/>
<dbReference type="EvolutionaryTrace" id="P40748"/>
<dbReference type="PRO" id="PR:P40748"/>
<dbReference type="Proteomes" id="UP000002494">
    <property type="component" value="Unplaced"/>
</dbReference>
<dbReference type="GO" id="GO:0070382">
    <property type="term" value="C:exocytic vesicle"/>
    <property type="evidence" value="ECO:0000318"/>
    <property type="project" value="GO_Central"/>
</dbReference>
<dbReference type="GO" id="GO:0005886">
    <property type="term" value="C:plasma membrane"/>
    <property type="evidence" value="ECO:0000318"/>
    <property type="project" value="GO_Central"/>
</dbReference>
<dbReference type="GO" id="GO:0098794">
    <property type="term" value="C:postsynapse"/>
    <property type="evidence" value="ECO:0000266"/>
    <property type="project" value="RGD"/>
</dbReference>
<dbReference type="GO" id="GO:0098793">
    <property type="term" value="C:presynapse"/>
    <property type="evidence" value="ECO:0007669"/>
    <property type="project" value="GOC"/>
</dbReference>
<dbReference type="GO" id="GO:0097060">
    <property type="term" value="C:synaptic membrane"/>
    <property type="evidence" value="ECO:0000314"/>
    <property type="project" value="SynGO"/>
</dbReference>
<dbReference type="GO" id="GO:0030658">
    <property type="term" value="C:transport vesicle membrane"/>
    <property type="evidence" value="ECO:0007669"/>
    <property type="project" value="UniProtKB-SubCell"/>
</dbReference>
<dbReference type="GO" id="GO:0005509">
    <property type="term" value="F:calcium ion binding"/>
    <property type="evidence" value="ECO:0000304"/>
    <property type="project" value="RGD"/>
</dbReference>
<dbReference type="GO" id="GO:0061891">
    <property type="term" value="F:calcium ion sensor activity"/>
    <property type="evidence" value="ECO:0000318"/>
    <property type="project" value="GO_Central"/>
</dbReference>
<dbReference type="GO" id="GO:0005544">
    <property type="term" value="F:calcium-dependent phospholipid binding"/>
    <property type="evidence" value="ECO:0000314"/>
    <property type="project" value="RGD"/>
</dbReference>
<dbReference type="GO" id="GO:0030276">
    <property type="term" value="F:clathrin binding"/>
    <property type="evidence" value="ECO:0000314"/>
    <property type="project" value="BHF-UCL"/>
</dbReference>
<dbReference type="GO" id="GO:0042802">
    <property type="term" value="F:identical protein binding"/>
    <property type="evidence" value="ECO:0000266"/>
    <property type="project" value="RGD"/>
</dbReference>
<dbReference type="GO" id="GO:0005546">
    <property type="term" value="F:phosphatidylinositol-4,5-bisphosphate binding"/>
    <property type="evidence" value="ECO:0000314"/>
    <property type="project" value="ParkinsonsUK-UCL"/>
</dbReference>
<dbReference type="GO" id="GO:0001786">
    <property type="term" value="F:phosphatidylserine binding"/>
    <property type="evidence" value="ECO:0000314"/>
    <property type="project" value="ParkinsonsUK-UCL"/>
</dbReference>
<dbReference type="GO" id="GO:0046982">
    <property type="term" value="F:protein heterodimerization activity"/>
    <property type="evidence" value="ECO:0000266"/>
    <property type="project" value="RGD"/>
</dbReference>
<dbReference type="GO" id="GO:0042803">
    <property type="term" value="F:protein homodimerization activity"/>
    <property type="evidence" value="ECO:0000266"/>
    <property type="project" value="RGD"/>
</dbReference>
<dbReference type="GO" id="GO:0000149">
    <property type="term" value="F:SNARE binding"/>
    <property type="evidence" value="ECO:0000314"/>
    <property type="project" value="ParkinsonsUK-UCL"/>
</dbReference>
<dbReference type="GO" id="GO:0019905">
    <property type="term" value="F:syntaxin binding"/>
    <property type="evidence" value="ECO:0000314"/>
    <property type="project" value="RGD"/>
</dbReference>
<dbReference type="GO" id="GO:0017156">
    <property type="term" value="P:calcium-ion regulated exocytosis"/>
    <property type="evidence" value="ECO:0000304"/>
    <property type="project" value="RGD"/>
</dbReference>
<dbReference type="GO" id="GO:0030154">
    <property type="term" value="P:cell differentiation"/>
    <property type="evidence" value="ECO:0007669"/>
    <property type="project" value="UniProtKB-KW"/>
</dbReference>
<dbReference type="GO" id="GO:0007268">
    <property type="term" value="P:chemical synaptic transmission"/>
    <property type="evidence" value="ECO:0000318"/>
    <property type="project" value="GO_Central"/>
</dbReference>
<dbReference type="GO" id="GO:1903861">
    <property type="term" value="P:positive regulation of dendrite extension"/>
    <property type="evidence" value="ECO:0000266"/>
    <property type="project" value="RGD"/>
</dbReference>
<dbReference type="GO" id="GO:0031340">
    <property type="term" value="P:positive regulation of vesicle fusion"/>
    <property type="evidence" value="ECO:0000314"/>
    <property type="project" value="RGD"/>
</dbReference>
<dbReference type="GO" id="GO:0017158">
    <property type="term" value="P:regulation of calcium ion-dependent exocytosis"/>
    <property type="evidence" value="ECO:0000315"/>
    <property type="project" value="ParkinsonsUK-UCL"/>
</dbReference>
<dbReference type="GO" id="GO:0099072">
    <property type="term" value="P:regulation of postsynaptic membrane neurotransmitter receptor levels"/>
    <property type="evidence" value="ECO:0000266"/>
    <property type="project" value="RGD"/>
</dbReference>
<dbReference type="GO" id="GO:0051592">
    <property type="term" value="P:response to calcium ion"/>
    <property type="evidence" value="ECO:0000314"/>
    <property type="project" value="RGD"/>
</dbReference>
<dbReference type="GO" id="GO:0016079">
    <property type="term" value="P:synaptic vesicle exocytosis"/>
    <property type="evidence" value="ECO:0000304"/>
    <property type="project" value="RGD"/>
</dbReference>
<dbReference type="GO" id="GO:0016192">
    <property type="term" value="P:vesicle-mediated transport"/>
    <property type="evidence" value="ECO:0000318"/>
    <property type="project" value="GO_Central"/>
</dbReference>
<dbReference type="CDD" id="cd08385">
    <property type="entry name" value="C2A_Synaptotagmin-1-5-6-9-10"/>
    <property type="match status" value="1"/>
</dbReference>
<dbReference type="CDD" id="cd08403">
    <property type="entry name" value="C2B_Synaptotagmin-3-5-6-9-10"/>
    <property type="match status" value="1"/>
</dbReference>
<dbReference type="FunFam" id="2.60.40.150:FF:000005">
    <property type="entry name" value="Synaptotagmin 6"/>
    <property type="match status" value="1"/>
</dbReference>
<dbReference type="FunFam" id="2.60.40.150:FF:000011">
    <property type="entry name" value="Synaptotagmin 6"/>
    <property type="match status" value="1"/>
</dbReference>
<dbReference type="Gene3D" id="2.60.40.150">
    <property type="entry name" value="C2 domain"/>
    <property type="match status" value="2"/>
</dbReference>
<dbReference type="InterPro" id="IPR000008">
    <property type="entry name" value="C2_dom"/>
</dbReference>
<dbReference type="InterPro" id="IPR035892">
    <property type="entry name" value="C2_domain_sf"/>
</dbReference>
<dbReference type="InterPro" id="IPR001565">
    <property type="entry name" value="Synaptotagmin"/>
</dbReference>
<dbReference type="PANTHER" id="PTHR10024">
    <property type="entry name" value="SYNAPTOTAGMIN"/>
    <property type="match status" value="1"/>
</dbReference>
<dbReference type="PANTHER" id="PTHR10024:SF176">
    <property type="entry name" value="SYNAPTOTAGMIN-3"/>
    <property type="match status" value="1"/>
</dbReference>
<dbReference type="Pfam" id="PF00168">
    <property type="entry name" value="C2"/>
    <property type="match status" value="2"/>
</dbReference>
<dbReference type="PRINTS" id="PR00360">
    <property type="entry name" value="C2DOMAIN"/>
</dbReference>
<dbReference type="PRINTS" id="PR00399">
    <property type="entry name" value="SYNAPTOTAGMN"/>
</dbReference>
<dbReference type="SMART" id="SM00239">
    <property type="entry name" value="C2"/>
    <property type="match status" value="2"/>
</dbReference>
<dbReference type="SUPFAM" id="SSF49562">
    <property type="entry name" value="C2 domain (Calcium/lipid-binding domain, CaLB)"/>
    <property type="match status" value="2"/>
</dbReference>
<dbReference type="PROSITE" id="PS50004">
    <property type="entry name" value="C2"/>
    <property type="match status" value="2"/>
</dbReference>
<name>SYT3_RAT</name>
<comment type="function">
    <text evidence="2 6 7">Ca(2+) sensor involved in Ca(2+)-dependent exocytosis of secretory vesicles through Ca(2+) and phospholipid binding to the C2 domain. Ca(2+) induces binding of the C2-domains to phospholipid membranes and to assembled SNARE-complexes; both actions contribute to triggering exocytosis (PubMed:11823420, PubMed:18508778). Plays a role in dendrite formation by melanocytes (By similarity).</text>
</comment>
<comment type="cofactor">
    <cofactor evidence="4 6 8">
        <name>Ca(2+)</name>
        <dbReference type="ChEBI" id="CHEBI:29108"/>
    </cofactor>
    <text evidence="8">Binds 3 Ca(2+) ions per subunit. The ions are bound to the C2 domains.</text>
</comment>
<comment type="subunit">
    <text evidence="1">Homodimer; disulfide-linked via the cysteine motif. Can also form heterodimers with SYT6, SYT9 and SYT10.</text>
</comment>
<comment type="interaction">
    <interactant intactId="EBI-458106">
        <id>P40748</id>
    </interactant>
    <interactant intactId="EBI-77718">
        <id>P19491</id>
        <label>Gria2</label>
    </interactant>
    <organismsDiffer>false</organismsDiffer>
    <experiments>3</experiments>
</comment>
<comment type="subcellular location">
    <subcellularLocation>
        <location evidence="6">Cell membrane</location>
        <topology evidence="3">Single-pass membrane protein</topology>
    </subcellularLocation>
    <subcellularLocation>
        <location evidence="10">Cytoplasmic vesicle</location>
        <location evidence="10">Secretory vesicle membrane</location>
        <topology evidence="3">Single-pass membrane protein</topology>
    </subcellularLocation>
</comment>
<comment type="tissue specificity">
    <text evidence="9">Brain, various endocrine tissues and hormone-secreting clonal cells.</text>
</comment>
<comment type="domain">
    <text evidence="6">The first C2 domain mediates Ca(2+)-dependent phospholipid binding.</text>
</comment>
<comment type="domain">
    <text evidence="1">The cysteine motif mediates homo- or heterodimer formation via formation of disulfide bonds.</text>
</comment>
<comment type="similarity">
    <text evidence="10">Belongs to the synaptotagmin family.</text>
</comment>
<accession>P40748</accession>
<accession>Q925B7</accession>
<reference key="1">
    <citation type="journal article" date="1994" name="J. Biol. Chem.">
        <title>Synaptotagmin III is a novel isoform of rat synaptotagmin expressed in endocrine and neuronal cells.</title>
        <authorList>
            <person name="Mizuta M."/>
            <person name="Inagaki N."/>
            <person name="Nemoto Y."/>
            <person name="Matsukura S."/>
            <person name="Takahashi M."/>
            <person name="Seino S."/>
        </authorList>
    </citation>
    <scope>NUCLEOTIDE SEQUENCE [MRNA]</scope>
    <scope>TISSUE SPECIFICITY</scope>
    <source>
        <strain>Sprague-Dawley</strain>
        <tissue>Brain</tissue>
    </source>
</reference>
<reference key="2">
    <citation type="submission" date="2001-05" db="EMBL/GenBank/DDBJ databases">
        <authorList>
            <person name="Shin O.-H."/>
            <person name="Li C."/>
            <person name="Ullrich B."/>
            <person name="Zhang J.Z."/>
            <person name="Anderson R.G.W."/>
            <person name="Brose N."/>
            <person name="Suedhof T.C."/>
        </authorList>
    </citation>
    <scope>NUCLEOTIDE SEQUENCE [MRNA]</scope>
</reference>
<reference key="3">
    <citation type="journal article" date="2002" name="EMBO J.">
        <title>Synaptotagmins form a hierarchy of exocytotic Ca(2+) sensors with distinct Ca(2+) affinities.</title>
        <authorList>
            <person name="Sugita S."/>
            <person name="Shin O.H."/>
            <person name="Han W."/>
            <person name="Lao Y."/>
            <person name="Suedhof T.C."/>
        </authorList>
    </citation>
    <scope>SUBCELLULAR LOCATION</scope>
    <scope>FUNCTION</scope>
    <scope>COFACTOR</scope>
    <scope>DOMAIN</scope>
    <scope>MUTAGENESIS OF ASP-334</scope>
</reference>
<reference key="4">
    <citation type="journal article" date="2008" name="J. Biol. Chem.">
        <title>Analysis of the synaptotagmin family during reconstituted membrane fusion. Uncovering a class of inhibitory isoforms.</title>
        <authorList>
            <person name="Bhalla A."/>
            <person name="Chicka M.C."/>
            <person name="Chapman E.R."/>
        </authorList>
    </citation>
    <scope>FUNCTION</scope>
</reference>
<reference key="5">
    <citation type="journal article" date="1999" name="J. Cell Biol.">
        <title>Crystal structure of the cytosolic C2A-C2B domains of synaptotagmin III. Implications for Ca(2+)-independent SNARE complex interaction.</title>
        <authorList>
            <person name="Sutton R.B."/>
            <person name="Ernst J.A."/>
            <person name="Brunger A.T."/>
        </authorList>
    </citation>
    <scope>X-RAY CRYSTALLOGRAPHY (3.2 ANGSTROMS) OF 293-588</scope>
</reference>
<reference key="6">
    <citation type="journal article" date="2010" name="Nat. Struct. Mol. Biol.">
        <title>Molecular mechanism of the synaptotagmin-SNARE interaction in Ca2+-triggered vesicle fusion.</title>
        <authorList>
            <person name="Vrljic M."/>
            <person name="Strop P."/>
            <person name="Ernst J.A."/>
            <person name="Sutton R.B."/>
            <person name="Chu S."/>
            <person name="Brunger A.T."/>
        </authorList>
    </citation>
    <scope>X-RAY CRYSTALLOGRAPHY (3.50 ANGSTROMS) OF 292-587 IN COMPLEX WITH CALCIUM</scope>
    <scope>COFACTOR</scope>
</reference>
<keyword id="KW-0002">3D-structure</keyword>
<keyword id="KW-0106">Calcium</keyword>
<keyword id="KW-1003">Cell membrane</keyword>
<keyword id="KW-0968">Cytoplasmic vesicle</keyword>
<keyword id="KW-0221">Differentiation</keyword>
<keyword id="KW-1015">Disulfide bond</keyword>
<keyword id="KW-0472">Membrane</keyword>
<keyword id="KW-0479">Metal-binding</keyword>
<keyword id="KW-0488">Methylation</keyword>
<keyword id="KW-1185">Reference proteome</keyword>
<keyword id="KW-0677">Repeat</keyword>
<keyword id="KW-0812">Transmembrane</keyword>
<keyword id="KW-1133">Transmembrane helix</keyword>
<gene>
    <name type="primary">Syt3</name>
</gene>